<dbReference type="EMBL" id="AF199020">
    <property type="protein sequence ID" value="AAG28538.1"/>
    <property type="molecule type" value="Genomic_DNA"/>
</dbReference>
<dbReference type="GO" id="GO:0046872">
    <property type="term" value="F:metal ion binding"/>
    <property type="evidence" value="ECO:0007669"/>
    <property type="project" value="UniProtKB-KW"/>
</dbReference>
<dbReference type="InterPro" id="IPR001008">
    <property type="entry name" value="Metalthion_mollusc"/>
</dbReference>
<dbReference type="PRINTS" id="PR00875">
    <property type="entry name" value="MTMOLLUSC"/>
</dbReference>
<comment type="function">
    <text>The metallothioneins are involved in the cellular sequestration of toxic metal ions.</text>
</comment>
<comment type="subunit">
    <text evidence="1">Homodimer.</text>
</comment>
<comment type="similarity">
    <text evidence="3">Belongs to the metallothionein superfamily. Type 2 family.</text>
</comment>
<protein>
    <recommendedName>
        <fullName>Metallothionein 20-III isoform A</fullName>
        <shortName>MT-20-IIIA</shortName>
        <shortName>MT-I</shortName>
    </recommendedName>
</protein>
<accession>P69154</accession>
<accession>P80253</accession>
<accession>Q9GU31</accession>
<name>MT23A_MYTGA</name>
<proteinExistence type="inferred from homology"/>
<reference key="1">
    <citation type="journal article" date="2002" name="Comp. Biochem. Physiol.">
        <title>Cloning and sequencing of a novel metallothionein gene in Mytilus galloprovincialis Lam.</title>
        <authorList>
            <person name="Ceratto N."/>
            <person name="Dondero F."/>
            <person name="van de Loo J.W.H.P."/>
            <person name="Burlando B."/>
            <person name="Viarengo A."/>
        </authorList>
    </citation>
    <scope>NUCLEOTIDE SEQUENCE [GENOMIC DNA]</scope>
</reference>
<organism>
    <name type="scientific">Mytilus galloprovincialis</name>
    <name type="common">Mediterranean mussel</name>
    <dbReference type="NCBI Taxonomy" id="29158"/>
    <lineage>
        <taxon>Eukaryota</taxon>
        <taxon>Metazoa</taxon>
        <taxon>Spiralia</taxon>
        <taxon>Lophotrochozoa</taxon>
        <taxon>Mollusca</taxon>
        <taxon>Bivalvia</taxon>
        <taxon>Autobranchia</taxon>
        <taxon>Pteriomorphia</taxon>
        <taxon>Mytilida</taxon>
        <taxon>Mytiloidea</taxon>
        <taxon>Mytilidae</taxon>
        <taxon>Mytilinae</taxon>
        <taxon>Mytilus</taxon>
    </lineage>
</organism>
<keyword id="KW-0104">Cadmium</keyword>
<keyword id="KW-0479">Metal-binding</keyword>
<keyword id="KW-0480">Metal-thiolate cluster</keyword>
<sequence length="72" mass="7030">MPGPCNCIETNVCICGTGCSGKCCQCGDACKCASGCGCSGCKVVCRCSGTCACGCDCTGPINCKCESGCSCK</sequence>
<feature type="initiator methionine" description="Removed" evidence="1">
    <location>
        <position position="1"/>
    </location>
</feature>
<feature type="chain" id="PRO_0000197333" description="Metallothionein 20-III isoform A">
    <location>
        <begin position="2"/>
        <end position="72"/>
    </location>
</feature>
<feature type="binding site" evidence="2">
    <location>
        <position position="15"/>
    </location>
    <ligand>
        <name>Cd(2+)</name>
        <dbReference type="ChEBI" id="CHEBI:48775"/>
        <label>1</label>
    </ligand>
</feature>
<feature type="binding site" evidence="2">
    <location>
        <position position="19"/>
    </location>
    <ligand>
        <name>Cd(2+)</name>
        <dbReference type="ChEBI" id="CHEBI:48775"/>
        <label>1</label>
    </ligand>
</feature>
<feature type="binding site" evidence="2">
    <location>
        <position position="19"/>
    </location>
    <ligand>
        <name>Cd(2+)</name>
        <dbReference type="ChEBI" id="CHEBI:48775"/>
        <label>2</label>
    </ligand>
</feature>
<feature type="binding site" evidence="2">
    <location>
        <position position="24"/>
    </location>
    <ligand>
        <name>Cd(2+)</name>
        <dbReference type="ChEBI" id="CHEBI:48775"/>
        <label>2</label>
    </ligand>
</feature>
<feature type="binding site" evidence="2">
    <location>
        <position position="26"/>
    </location>
    <ligand>
        <name>Cd(2+)</name>
        <dbReference type="ChEBI" id="CHEBI:48775"/>
        <label>3</label>
    </ligand>
</feature>
<feature type="binding site" evidence="2">
    <location>
        <position position="30"/>
    </location>
    <ligand>
        <name>Cd(2+)</name>
        <dbReference type="ChEBI" id="CHEBI:48775"/>
        <label>3</label>
    </ligand>
</feature>
<feature type="binding site" evidence="2">
    <location>
        <position position="32"/>
    </location>
    <ligand>
        <name>Cd(2+)</name>
        <dbReference type="ChEBI" id="CHEBI:48775"/>
        <label>1</label>
    </ligand>
</feature>
<feature type="binding site" evidence="2">
    <location>
        <position position="32"/>
    </location>
    <ligand>
        <name>Cd(2+)</name>
        <dbReference type="ChEBI" id="CHEBI:48775"/>
        <label>3</label>
    </ligand>
</feature>
<feature type="binding site" evidence="2">
    <location>
        <position position="36"/>
    </location>
    <ligand>
        <name>Cd(2+)</name>
        <dbReference type="ChEBI" id="CHEBI:48775"/>
        <label>1</label>
    </ligand>
</feature>
<feature type="binding site" evidence="2">
    <location>
        <position position="38"/>
    </location>
    <ligand>
        <name>Cd(2+)</name>
        <dbReference type="ChEBI" id="CHEBI:48775"/>
        <label>2</label>
    </ligand>
</feature>
<feature type="binding site" evidence="2">
    <location>
        <position position="41"/>
    </location>
    <ligand>
        <name>Cd(2+)</name>
        <dbReference type="ChEBI" id="CHEBI:48775"/>
        <label>2</label>
    </ligand>
</feature>
<feature type="binding site" evidence="2">
    <location>
        <position position="41"/>
    </location>
    <ligand>
        <name>Cd(2+)</name>
        <dbReference type="ChEBI" id="CHEBI:48775"/>
        <label>3</label>
    </ligand>
</feature>
<feature type="binding site" evidence="2">
    <location>
        <position position="45"/>
    </location>
    <ligand>
        <name>Cd(2+)</name>
        <dbReference type="ChEBI" id="CHEBI:48775"/>
        <label>4</label>
    </ligand>
</feature>
<feature type="binding site" evidence="2">
    <location>
        <position position="47"/>
    </location>
    <ligand>
        <name>Cd(2+)</name>
        <dbReference type="ChEBI" id="CHEBI:48775"/>
        <label>5</label>
    </ligand>
</feature>
<feature type="binding site" evidence="2">
    <location>
        <position position="51"/>
    </location>
    <ligand>
        <name>Cd(2+)</name>
        <dbReference type="ChEBI" id="CHEBI:48775"/>
        <label>5</label>
    </ligand>
</feature>
<feature type="binding site" evidence="2">
    <location>
        <position position="53"/>
    </location>
    <ligand>
        <name>Cd(2+)</name>
        <dbReference type="ChEBI" id="CHEBI:48775"/>
        <label>5</label>
    </ligand>
</feature>
<feature type="binding site" evidence="2">
    <location>
        <position position="53"/>
    </location>
    <ligand>
        <name>Cd(2+)</name>
        <dbReference type="ChEBI" id="CHEBI:48775"/>
        <label>6</label>
    </ligand>
</feature>
<feature type="binding site" evidence="2">
    <location>
        <position position="57"/>
    </location>
    <ligand>
        <name>Cd(2+)</name>
        <dbReference type="ChEBI" id="CHEBI:48775"/>
        <label>4</label>
    </ligand>
</feature>
<feature type="binding site" evidence="2">
    <location>
        <position position="57"/>
    </location>
    <ligand>
        <name>Cd(2+)</name>
        <dbReference type="ChEBI" id="CHEBI:48775"/>
        <label>5</label>
    </ligand>
</feature>
<feature type="binding site" evidence="2">
    <location>
        <position position="63"/>
    </location>
    <ligand>
        <name>Cd(2+)</name>
        <dbReference type="ChEBI" id="CHEBI:48775"/>
        <label>4</label>
    </ligand>
</feature>
<feature type="binding site" evidence="2">
    <location>
        <position position="65"/>
    </location>
    <ligand>
        <name>Cd(2+)</name>
        <dbReference type="ChEBI" id="CHEBI:48775"/>
        <label>6</label>
    </ligand>
</feature>
<feature type="binding site" evidence="2">
    <location>
        <position position="69"/>
    </location>
    <ligand>
        <name>Cd(2+)</name>
        <dbReference type="ChEBI" id="CHEBI:48775"/>
        <label>6</label>
    </ligand>
</feature>
<feature type="binding site" evidence="2">
    <location>
        <position position="71"/>
    </location>
    <ligand>
        <name>Cd(2+)</name>
        <dbReference type="ChEBI" id="CHEBI:48775"/>
        <label>4</label>
    </ligand>
</feature>
<feature type="binding site" evidence="2">
    <location>
        <position position="71"/>
    </location>
    <ligand>
        <name>Cd(2+)</name>
        <dbReference type="ChEBI" id="CHEBI:48775"/>
        <label>6</label>
    </ligand>
</feature>
<evidence type="ECO:0000250" key="1"/>
<evidence type="ECO:0000250" key="2">
    <source>
        <dbReference type="UniProtKB" id="P33187"/>
    </source>
</evidence>
<evidence type="ECO:0000305" key="3"/>